<evidence type="ECO:0000250" key="1">
    <source>
        <dbReference type="UniProtKB" id="P76249"/>
    </source>
</evidence>
<evidence type="ECO:0000255" key="2"/>
<evidence type="ECO:0000305" key="3"/>
<feature type="chain" id="PRO_0000316812" description="Leucine efflux protein">
    <location>
        <begin position="1"/>
        <end position="212"/>
    </location>
</feature>
<feature type="transmembrane region" description="Helical" evidence="2">
    <location>
        <begin position="12"/>
        <end position="32"/>
    </location>
</feature>
<feature type="transmembrane region" description="Helical" evidence="2">
    <location>
        <begin position="49"/>
        <end position="69"/>
    </location>
</feature>
<feature type="transmembrane region" description="Helical" evidence="2">
    <location>
        <begin position="71"/>
        <end position="91"/>
    </location>
</feature>
<feature type="transmembrane region" description="Helical" evidence="2">
    <location>
        <begin position="122"/>
        <end position="142"/>
    </location>
</feature>
<feature type="transmembrane region" description="Helical" evidence="2">
    <location>
        <begin position="153"/>
        <end position="173"/>
    </location>
</feature>
<feature type="transmembrane region" description="Helical" evidence="2">
    <location>
        <begin position="188"/>
        <end position="208"/>
    </location>
</feature>
<proteinExistence type="inferred from homology"/>
<reference key="1">
    <citation type="journal article" date="2005" name="Nucleic Acids Res.">
        <title>Genome dynamics and diversity of Shigella species, the etiologic agents of bacillary dysentery.</title>
        <authorList>
            <person name="Yang F."/>
            <person name="Yang J."/>
            <person name="Zhang X."/>
            <person name="Chen L."/>
            <person name="Jiang Y."/>
            <person name="Yan Y."/>
            <person name="Tang X."/>
            <person name="Wang J."/>
            <person name="Xiong Z."/>
            <person name="Dong J."/>
            <person name="Xue Y."/>
            <person name="Zhu Y."/>
            <person name="Xu X."/>
            <person name="Sun L."/>
            <person name="Chen S."/>
            <person name="Nie H."/>
            <person name="Peng J."/>
            <person name="Xu J."/>
            <person name="Wang Y."/>
            <person name="Yuan Z."/>
            <person name="Wen Y."/>
            <person name="Yao Z."/>
            <person name="Shen Y."/>
            <person name="Qiang B."/>
            <person name="Hou Y."/>
            <person name="Yu J."/>
            <person name="Jin Q."/>
        </authorList>
    </citation>
    <scope>NUCLEOTIDE SEQUENCE [LARGE SCALE GENOMIC DNA]</scope>
    <source>
        <strain>Ss046</strain>
    </source>
</reference>
<organism>
    <name type="scientific">Shigella sonnei (strain Ss046)</name>
    <dbReference type="NCBI Taxonomy" id="300269"/>
    <lineage>
        <taxon>Bacteria</taxon>
        <taxon>Pseudomonadati</taxon>
        <taxon>Pseudomonadota</taxon>
        <taxon>Gammaproteobacteria</taxon>
        <taxon>Enterobacterales</taxon>
        <taxon>Enterobacteriaceae</taxon>
        <taxon>Shigella</taxon>
    </lineage>
</organism>
<accession>Q3Z2D8</accession>
<name>LEUE_SHISS</name>
<sequence>MFAEYGVLNYWTYLVGAIFIVLVPGPNTLFVLKNSVSSGMKGGYLAACGVFIGDAVLMFLAWAGVATLIKTTPILFNIVRYLGAFYLLYLGSKILYATLKGKNNEAKSDEPQYGAIFKRALILSLTNPKAILFYVSFFVQFIDVNAPHTGISFFILATTLELVSFCYLSFLIISGAFVTQYIRTKKKLAKVGNSLIGLMFVGFAARLATLQS</sequence>
<gene>
    <name type="primary">leuE</name>
    <name type="ordered locus">SSON_1363</name>
</gene>
<protein>
    <recommendedName>
        <fullName evidence="1">Leucine efflux protein</fullName>
    </recommendedName>
</protein>
<dbReference type="EMBL" id="CP000038">
    <property type="protein sequence ID" value="AAZ88074.1"/>
    <property type="molecule type" value="Genomic_DNA"/>
</dbReference>
<dbReference type="RefSeq" id="WP_000457202.1">
    <property type="nucleotide sequence ID" value="NC_007384.1"/>
</dbReference>
<dbReference type="SMR" id="Q3Z2D8"/>
<dbReference type="GeneID" id="93776046"/>
<dbReference type="KEGG" id="ssn:SSON_1363"/>
<dbReference type="HOGENOM" id="CLU_079569_3_1_6"/>
<dbReference type="Proteomes" id="UP000002529">
    <property type="component" value="Chromosome"/>
</dbReference>
<dbReference type="GO" id="GO:0005886">
    <property type="term" value="C:plasma membrane"/>
    <property type="evidence" value="ECO:0007669"/>
    <property type="project" value="UniProtKB-SubCell"/>
</dbReference>
<dbReference type="GO" id="GO:0015297">
    <property type="term" value="F:antiporter activity"/>
    <property type="evidence" value="ECO:0007669"/>
    <property type="project" value="UniProtKB-KW"/>
</dbReference>
<dbReference type="GO" id="GO:0015190">
    <property type="term" value="F:L-leucine transmembrane transporter activity"/>
    <property type="evidence" value="ECO:0007669"/>
    <property type="project" value="TreeGrafter"/>
</dbReference>
<dbReference type="GO" id="GO:0015820">
    <property type="term" value="P:L-leucine transport"/>
    <property type="evidence" value="ECO:0007669"/>
    <property type="project" value="TreeGrafter"/>
</dbReference>
<dbReference type="InterPro" id="IPR001123">
    <property type="entry name" value="LeuE-type"/>
</dbReference>
<dbReference type="NCBIfam" id="NF008201">
    <property type="entry name" value="PRK10958.1"/>
    <property type="match status" value="1"/>
</dbReference>
<dbReference type="PANTHER" id="PTHR30086">
    <property type="entry name" value="ARGININE EXPORTER PROTEIN ARGO"/>
    <property type="match status" value="1"/>
</dbReference>
<dbReference type="PANTHER" id="PTHR30086:SF15">
    <property type="entry name" value="LEUCINE EFFLUX PROTEIN"/>
    <property type="match status" value="1"/>
</dbReference>
<dbReference type="Pfam" id="PF01810">
    <property type="entry name" value="LysE"/>
    <property type="match status" value="1"/>
</dbReference>
<dbReference type="PIRSF" id="PIRSF006324">
    <property type="entry name" value="LeuE"/>
    <property type="match status" value="1"/>
</dbReference>
<keyword id="KW-0029">Amino-acid transport</keyword>
<keyword id="KW-0050">Antiport</keyword>
<keyword id="KW-0997">Cell inner membrane</keyword>
<keyword id="KW-1003">Cell membrane</keyword>
<keyword id="KW-0472">Membrane</keyword>
<keyword id="KW-1185">Reference proteome</keyword>
<keyword id="KW-0812">Transmembrane</keyword>
<keyword id="KW-1133">Transmembrane helix</keyword>
<keyword id="KW-0813">Transport</keyword>
<comment type="function">
    <text evidence="1">Exporter of leucine.</text>
</comment>
<comment type="catalytic activity">
    <reaction evidence="1">
        <text>L-leucine(in) + H(+)(out) = L-leucine(out) + H(+)(in)</text>
        <dbReference type="Rhea" id="RHEA:28731"/>
        <dbReference type="ChEBI" id="CHEBI:15378"/>
        <dbReference type="ChEBI" id="CHEBI:57427"/>
    </reaction>
    <physiologicalReaction direction="left-to-right" evidence="1">
        <dbReference type="Rhea" id="RHEA:28732"/>
    </physiologicalReaction>
</comment>
<comment type="subcellular location">
    <subcellularLocation>
        <location evidence="1">Cell inner membrane</location>
        <topology evidence="2">Multi-pass membrane protein</topology>
    </subcellularLocation>
</comment>
<comment type="similarity">
    <text evidence="3">Belongs to the Rht family.</text>
</comment>